<organism>
    <name type="scientific">Frankia casuarinae (strain DSM 45818 / CECT 9043 / HFP020203 / CcI3)</name>
    <dbReference type="NCBI Taxonomy" id="106370"/>
    <lineage>
        <taxon>Bacteria</taxon>
        <taxon>Bacillati</taxon>
        <taxon>Actinomycetota</taxon>
        <taxon>Actinomycetes</taxon>
        <taxon>Frankiales</taxon>
        <taxon>Frankiaceae</taxon>
        <taxon>Frankia</taxon>
    </lineage>
</organism>
<dbReference type="EC" id="6.3.5.3" evidence="1"/>
<dbReference type="EMBL" id="CP000249">
    <property type="protein sequence ID" value="ABD13763.1"/>
    <property type="molecule type" value="Genomic_DNA"/>
</dbReference>
<dbReference type="RefSeq" id="WP_011438771.1">
    <property type="nucleotide sequence ID" value="NZ_JENI01000009.1"/>
</dbReference>
<dbReference type="SMR" id="Q2J4M9"/>
<dbReference type="STRING" id="106370.Francci3_4417"/>
<dbReference type="KEGG" id="fra:Francci3_4417"/>
<dbReference type="eggNOG" id="COG0046">
    <property type="taxonomic scope" value="Bacteria"/>
</dbReference>
<dbReference type="HOGENOM" id="CLU_003100_0_1_11"/>
<dbReference type="OrthoDB" id="9804441at2"/>
<dbReference type="PhylomeDB" id="Q2J4M9"/>
<dbReference type="UniPathway" id="UPA00074">
    <property type="reaction ID" value="UER00128"/>
</dbReference>
<dbReference type="Proteomes" id="UP000001937">
    <property type="component" value="Chromosome"/>
</dbReference>
<dbReference type="GO" id="GO:0005737">
    <property type="term" value="C:cytoplasm"/>
    <property type="evidence" value="ECO:0007669"/>
    <property type="project" value="UniProtKB-SubCell"/>
</dbReference>
<dbReference type="GO" id="GO:0005524">
    <property type="term" value="F:ATP binding"/>
    <property type="evidence" value="ECO:0007669"/>
    <property type="project" value="UniProtKB-UniRule"/>
</dbReference>
<dbReference type="GO" id="GO:0000287">
    <property type="term" value="F:magnesium ion binding"/>
    <property type="evidence" value="ECO:0007669"/>
    <property type="project" value="UniProtKB-UniRule"/>
</dbReference>
<dbReference type="GO" id="GO:0004642">
    <property type="term" value="F:phosphoribosylformylglycinamidine synthase activity"/>
    <property type="evidence" value="ECO:0007669"/>
    <property type="project" value="UniProtKB-UniRule"/>
</dbReference>
<dbReference type="GO" id="GO:0006189">
    <property type="term" value="P:'de novo' IMP biosynthetic process"/>
    <property type="evidence" value="ECO:0007669"/>
    <property type="project" value="UniProtKB-UniRule"/>
</dbReference>
<dbReference type="CDD" id="cd02203">
    <property type="entry name" value="PurL_repeat1"/>
    <property type="match status" value="1"/>
</dbReference>
<dbReference type="CDD" id="cd02204">
    <property type="entry name" value="PurL_repeat2"/>
    <property type="match status" value="1"/>
</dbReference>
<dbReference type="FunFam" id="3.30.1330.10:FF:000004">
    <property type="entry name" value="Phosphoribosylformylglycinamidine synthase subunit PurL"/>
    <property type="match status" value="1"/>
</dbReference>
<dbReference type="Gene3D" id="3.90.650.10">
    <property type="entry name" value="PurM-like C-terminal domain"/>
    <property type="match status" value="2"/>
</dbReference>
<dbReference type="Gene3D" id="3.30.1330.10">
    <property type="entry name" value="PurM-like, N-terminal domain"/>
    <property type="match status" value="2"/>
</dbReference>
<dbReference type="HAMAP" id="MF_00420">
    <property type="entry name" value="PurL_2"/>
    <property type="match status" value="1"/>
</dbReference>
<dbReference type="InterPro" id="IPR010074">
    <property type="entry name" value="PRibForGlyAmidine_synth_PurL"/>
</dbReference>
<dbReference type="InterPro" id="IPR041609">
    <property type="entry name" value="PurL_linker"/>
</dbReference>
<dbReference type="InterPro" id="IPR010918">
    <property type="entry name" value="PurM-like_C_dom"/>
</dbReference>
<dbReference type="InterPro" id="IPR036676">
    <property type="entry name" value="PurM-like_C_sf"/>
</dbReference>
<dbReference type="InterPro" id="IPR016188">
    <property type="entry name" value="PurM-like_N"/>
</dbReference>
<dbReference type="InterPro" id="IPR036921">
    <property type="entry name" value="PurM-like_N_sf"/>
</dbReference>
<dbReference type="NCBIfam" id="TIGR01736">
    <property type="entry name" value="FGAM_synth_II"/>
    <property type="match status" value="1"/>
</dbReference>
<dbReference type="NCBIfam" id="NF002290">
    <property type="entry name" value="PRK01213.1"/>
    <property type="match status" value="1"/>
</dbReference>
<dbReference type="PANTHER" id="PTHR43555">
    <property type="entry name" value="PHOSPHORIBOSYLFORMYLGLYCINAMIDINE SYNTHASE SUBUNIT PURL"/>
    <property type="match status" value="1"/>
</dbReference>
<dbReference type="PANTHER" id="PTHR43555:SF1">
    <property type="entry name" value="PHOSPHORIBOSYLFORMYLGLYCINAMIDINE SYNTHASE SUBUNIT PURL"/>
    <property type="match status" value="1"/>
</dbReference>
<dbReference type="Pfam" id="PF00586">
    <property type="entry name" value="AIRS"/>
    <property type="match status" value="2"/>
</dbReference>
<dbReference type="Pfam" id="PF02769">
    <property type="entry name" value="AIRS_C"/>
    <property type="match status" value="2"/>
</dbReference>
<dbReference type="Pfam" id="PF18072">
    <property type="entry name" value="FGAR-AT_linker"/>
    <property type="match status" value="1"/>
</dbReference>
<dbReference type="PIRSF" id="PIRSF001587">
    <property type="entry name" value="FGAM_synthase_II"/>
    <property type="match status" value="1"/>
</dbReference>
<dbReference type="SUPFAM" id="SSF56042">
    <property type="entry name" value="PurM C-terminal domain-like"/>
    <property type="match status" value="2"/>
</dbReference>
<dbReference type="SUPFAM" id="SSF55326">
    <property type="entry name" value="PurM N-terminal domain-like"/>
    <property type="match status" value="2"/>
</dbReference>
<accession>Q2J4M9</accession>
<gene>
    <name evidence="1" type="primary">purL</name>
    <name type="ordered locus">Francci3_4417</name>
</gene>
<reference key="1">
    <citation type="journal article" date="2007" name="Genome Res.">
        <title>Genome characteristics of facultatively symbiotic Frankia sp. strains reflect host range and host plant biogeography.</title>
        <authorList>
            <person name="Normand P."/>
            <person name="Lapierre P."/>
            <person name="Tisa L.S."/>
            <person name="Gogarten J.P."/>
            <person name="Alloisio N."/>
            <person name="Bagnarol E."/>
            <person name="Bassi C.A."/>
            <person name="Berry A.M."/>
            <person name="Bickhart D.M."/>
            <person name="Choisne N."/>
            <person name="Couloux A."/>
            <person name="Cournoyer B."/>
            <person name="Cruveiller S."/>
            <person name="Daubin V."/>
            <person name="Demange N."/>
            <person name="Francino M.P."/>
            <person name="Goltsman E."/>
            <person name="Huang Y."/>
            <person name="Kopp O.R."/>
            <person name="Labarre L."/>
            <person name="Lapidus A."/>
            <person name="Lavire C."/>
            <person name="Marechal J."/>
            <person name="Martinez M."/>
            <person name="Mastronunzio J.E."/>
            <person name="Mullin B.C."/>
            <person name="Niemann J."/>
            <person name="Pujic P."/>
            <person name="Rawnsley T."/>
            <person name="Rouy Z."/>
            <person name="Schenowitz C."/>
            <person name="Sellstedt A."/>
            <person name="Tavares F."/>
            <person name="Tomkins J.P."/>
            <person name="Vallenet D."/>
            <person name="Valverde C."/>
            <person name="Wall L.G."/>
            <person name="Wang Y."/>
            <person name="Medigue C."/>
            <person name="Benson D.R."/>
        </authorList>
    </citation>
    <scope>NUCLEOTIDE SEQUENCE [LARGE SCALE GENOMIC DNA]</scope>
    <source>
        <strain>DSM 45818 / CECT 9043 / HFP020203 / CcI3</strain>
    </source>
</reference>
<keyword id="KW-0067">ATP-binding</keyword>
<keyword id="KW-0963">Cytoplasm</keyword>
<keyword id="KW-0436">Ligase</keyword>
<keyword id="KW-0460">Magnesium</keyword>
<keyword id="KW-0479">Metal-binding</keyword>
<keyword id="KW-0547">Nucleotide-binding</keyword>
<keyword id="KW-0658">Purine biosynthesis</keyword>
<keyword id="KW-1185">Reference proteome</keyword>
<name>PURL_FRACC</name>
<feature type="chain" id="PRO_0000236653" description="Phosphoribosylformylglycinamidine synthase subunit PurL">
    <location>
        <begin position="1"/>
        <end position="761"/>
    </location>
</feature>
<feature type="region of interest" description="Disordered" evidence="2">
    <location>
        <begin position="1"/>
        <end position="21"/>
    </location>
</feature>
<feature type="compositionally biased region" description="Low complexity" evidence="2">
    <location>
        <begin position="1"/>
        <end position="16"/>
    </location>
</feature>
<feature type="active site" evidence="1">
    <location>
        <position position="57"/>
    </location>
</feature>
<feature type="active site" description="Proton acceptor" evidence="1">
    <location>
        <position position="105"/>
    </location>
</feature>
<feature type="binding site" evidence="1">
    <location>
        <position position="60"/>
    </location>
    <ligand>
        <name>ATP</name>
        <dbReference type="ChEBI" id="CHEBI:30616"/>
    </ligand>
</feature>
<feature type="binding site" evidence="1">
    <location>
        <position position="101"/>
    </location>
    <ligand>
        <name>ATP</name>
        <dbReference type="ChEBI" id="CHEBI:30616"/>
    </ligand>
</feature>
<feature type="binding site" evidence="1">
    <location>
        <position position="103"/>
    </location>
    <ligand>
        <name>Mg(2+)</name>
        <dbReference type="ChEBI" id="CHEBI:18420"/>
        <label>1</label>
    </ligand>
</feature>
<feature type="binding site" evidence="1">
    <location>
        <begin position="104"/>
        <end position="107"/>
    </location>
    <ligand>
        <name>substrate</name>
    </ligand>
</feature>
<feature type="binding site" evidence="1">
    <location>
        <position position="126"/>
    </location>
    <ligand>
        <name>substrate</name>
    </ligand>
</feature>
<feature type="binding site" evidence="1">
    <location>
        <position position="127"/>
    </location>
    <ligand>
        <name>Mg(2+)</name>
        <dbReference type="ChEBI" id="CHEBI:18420"/>
        <label>2</label>
    </ligand>
</feature>
<feature type="binding site" evidence="1">
    <location>
        <position position="252"/>
    </location>
    <ligand>
        <name>substrate</name>
    </ligand>
</feature>
<feature type="binding site" evidence="1">
    <location>
        <position position="280"/>
    </location>
    <ligand>
        <name>Mg(2+)</name>
        <dbReference type="ChEBI" id="CHEBI:18420"/>
        <label>2</label>
    </ligand>
</feature>
<feature type="binding site" evidence="1">
    <location>
        <begin position="329"/>
        <end position="331"/>
    </location>
    <ligand>
        <name>substrate</name>
    </ligand>
</feature>
<feature type="binding site" evidence="1">
    <location>
        <position position="519"/>
    </location>
    <ligand>
        <name>ATP</name>
        <dbReference type="ChEBI" id="CHEBI:30616"/>
    </ligand>
</feature>
<feature type="binding site" evidence="1">
    <location>
        <position position="556"/>
    </location>
    <ligand>
        <name>ATP</name>
        <dbReference type="ChEBI" id="CHEBI:30616"/>
    </ligand>
</feature>
<feature type="binding site" evidence="1">
    <location>
        <position position="557"/>
    </location>
    <ligand>
        <name>Mg(2+)</name>
        <dbReference type="ChEBI" id="CHEBI:18420"/>
        <label>1</label>
    </ligand>
</feature>
<feature type="binding site" evidence="1">
    <location>
        <position position="559"/>
    </location>
    <ligand>
        <name>substrate</name>
    </ligand>
</feature>
<evidence type="ECO:0000255" key="1">
    <source>
        <dbReference type="HAMAP-Rule" id="MF_00420"/>
    </source>
</evidence>
<evidence type="ECO:0000256" key="2">
    <source>
        <dbReference type="SAM" id="MobiDB-lite"/>
    </source>
</evidence>
<sequence length="761" mass="79825">MTGNPAAPAATSVSPPAEQPYQELGLTDDEYARIIATLGRRPSDAELAMYSVMWSEHCSYKSSKVHLRQFRDTPLTDRLLVGMGENAGVVDVGEGLAVTFKIESHNHPSFVEPYQGAATGVGGIVRDILTMGARPIGVLDPLRFGEADAADTARVLPGVVAGIGGYGNCLGLPTIGGEVVFDPTYAGNPLVNALCVGVMPVDRVQTSAATGVGNAVVLLGAKTGRDGIGGVSILASATFDEGGGPARRPSVQVGDPFTEKILIETCLELFDRKLVTGIQDLGGAGLTCALTETTAAGIATGQPGGMEVDLDLVPLREASMAAHEVLASESQERMLAIVTPEALPEVLALAERWGVLATRIGTVTNSGRLTVRWHGEVVVDVPPGSLADDGPVYERPLRRPVDFDLVRADAPTPARLARPRTGPELRETLLRLVASPNLCSRAWVTDQYDRYVQAGTVLAQPEDAGVLRLSAATGLGIALATDGNGRYARLDPFAGTQLALAEACRNVAAAGSVPIAVTNCLNFGSPEDPEVMWQFAQACAGLAEGCRRLGLPVTGGNVSFYNQTGSTPIHPTPVIGVLGLFDDVTRRTPIGFAEEGDVLILLGETADEFGGSEWAWVTHRHLGGEPPAVDFAREKLLGEILVAGSRDGMLTAAHDLSDGGLAQALVESCLRGGHGARIILPAGSDPFVELFSESAGRAVVAVPRAEELRFTDMCEVRGLPWRRVGVVDGDTLDVQDAFTVGLDELRAAHEGTLPALFGRLT</sequence>
<comment type="function">
    <text evidence="1">Part of the phosphoribosylformylglycinamidine synthase complex involved in the purines biosynthetic pathway. Catalyzes the ATP-dependent conversion of formylglycinamide ribonucleotide (FGAR) and glutamine to yield formylglycinamidine ribonucleotide (FGAM) and glutamate. The FGAM synthase complex is composed of three subunits. PurQ produces an ammonia molecule by converting glutamine to glutamate. PurL transfers the ammonia molecule to FGAR to form FGAM in an ATP-dependent manner. PurS interacts with PurQ and PurL and is thought to assist in the transfer of the ammonia molecule from PurQ to PurL.</text>
</comment>
<comment type="catalytic activity">
    <reaction evidence="1">
        <text>N(2)-formyl-N(1)-(5-phospho-beta-D-ribosyl)glycinamide + L-glutamine + ATP + H2O = 2-formamido-N(1)-(5-O-phospho-beta-D-ribosyl)acetamidine + L-glutamate + ADP + phosphate + H(+)</text>
        <dbReference type="Rhea" id="RHEA:17129"/>
        <dbReference type="ChEBI" id="CHEBI:15377"/>
        <dbReference type="ChEBI" id="CHEBI:15378"/>
        <dbReference type="ChEBI" id="CHEBI:29985"/>
        <dbReference type="ChEBI" id="CHEBI:30616"/>
        <dbReference type="ChEBI" id="CHEBI:43474"/>
        <dbReference type="ChEBI" id="CHEBI:58359"/>
        <dbReference type="ChEBI" id="CHEBI:147286"/>
        <dbReference type="ChEBI" id="CHEBI:147287"/>
        <dbReference type="ChEBI" id="CHEBI:456216"/>
        <dbReference type="EC" id="6.3.5.3"/>
    </reaction>
</comment>
<comment type="pathway">
    <text evidence="1">Purine metabolism; IMP biosynthesis via de novo pathway; 5-amino-1-(5-phospho-D-ribosyl)imidazole from N(2)-formyl-N(1)-(5-phospho-D-ribosyl)glycinamide: step 1/2.</text>
</comment>
<comment type="subunit">
    <text evidence="1">Monomer. Part of the FGAM synthase complex composed of 1 PurL, 1 PurQ and 2 PurS subunits.</text>
</comment>
<comment type="subcellular location">
    <subcellularLocation>
        <location evidence="1">Cytoplasm</location>
    </subcellularLocation>
</comment>
<comment type="similarity">
    <text evidence="1">Belongs to the FGAMS family.</text>
</comment>
<protein>
    <recommendedName>
        <fullName evidence="1">Phosphoribosylformylglycinamidine synthase subunit PurL</fullName>
        <shortName evidence="1">FGAM synthase</shortName>
        <ecNumber evidence="1">6.3.5.3</ecNumber>
    </recommendedName>
    <alternativeName>
        <fullName evidence="1">Formylglycinamide ribonucleotide amidotransferase subunit II</fullName>
        <shortName evidence="1">FGAR amidotransferase II</shortName>
        <shortName evidence="1">FGAR-AT II</shortName>
    </alternativeName>
    <alternativeName>
        <fullName evidence="1">Glutamine amidotransferase PurL</fullName>
    </alternativeName>
    <alternativeName>
        <fullName evidence="1">Phosphoribosylformylglycinamidine synthase subunit II</fullName>
    </alternativeName>
</protein>
<proteinExistence type="inferred from homology"/>